<keyword id="KW-0028">Amino-acid biosynthesis</keyword>
<keyword id="KW-0100">Branched-chain amino acid biosynthesis</keyword>
<keyword id="KW-0963">Cytoplasm</keyword>
<keyword id="KW-0432">Leucine biosynthesis</keyword>
<keyword id="KW-0460">Magnesium</keyword>
<keyword id="KW-0464">Manganese</keyword>
<keyword id="KW-0479">Metal-binding</keyword>
<keyword id="KW-0520">NAD</keyword>
<keyword id="KW-0560">Oxidoreductase</keyword>
<organism>
    <name type="scientific">Brucella abortus biovar 1 (strain 9-941)</name>
    <dbReference type="NCBI Taxonomy" id="262698"/>
    <lineage>
        <taxon>Bacteria</taxon>
        <taxon>Pseudomonadati</taxon>
        <taxon>Pseudomonadota</taxon>
        <taxon>Alphaproteobacteria</taxon>
        <taxon>Hyphomicrobiales</taxon>
        <taxon>Brucellaceae</taxon>
        <taxon>Brucella/Ochrobactrum group</taxon>
        <taxon>Brucella</taxon>
    </lineage>
</organism>
<sequence length="370" mass="39730">MASRKLLLLPGDGIGPEAMAEVRKVIAFLNSDLNLGFETEEGLVGGCAYDAHGQAISDADMEKALAADSVLFGAVGGPKWDSVPYEVRPEAGLLRLRKDMQLYANLRPAICYPALAHSSSLKPEVIEGLDILILRELTGGVYFGEPKEIIDLGNGQKRGIDTQVYDTYEIERIADVAFELARTRRNKVTSMEKRNVMKSGVLWNQGVTARHKEKHADVQLEHMLADAGGMQLVRWPKQFDVILTDNLFGDLLSDVAAMLTGSLGMLPSASLGAADSKTGKRKALYEPVHGSAPDIAGKGIANPIAMIASLAMCLRYSFGLVAEADRLEAAIAGVLDDGIRTADIWSEGNTKVGTTEMGDAILAKFKALSA</sequence>
<proteinExistence type="inferred from homology"/>
<gene>
    <name evidence="1" type="primary">leuB</name>
    <name type="ordered locus">BruAb2_0342</name>
</gene>
<comment type="function">
    <text evidence="1">Catalyzes the oxidation of 3-carboxy-2-hydroxy-4-methylpentanoate (3-isopropylmalate) to 3-carboxy-4-methyl-2-oxopentanoate. The product decarboxylates to 4-methyl-2 oxopentanoate.</text>
</comment>
<comment type="catalytic activity">
    <reaction evidence="1">
        <text>(2R,3S)-3-isopropylmalate + NAD(+) = 4-methyl-2-oxopentanoate + CO2 + NADH</text>
        <dbReference type="Rhea" id="RHEA:32271"/>
        <dbReference type="ChEBI" id="CHEBI:16526"/>
        <dbReference type="ChEBI" id="CHEBI:17865"/>
        <dbReference type="ChEBI" id="CHEBI:35121"/>
        <dbReference type="ChEBI" id="CHEBI:57540"/>
        <dbReference type="ChEBI" id="CHEBI:57945"/>
        <dbReference type="EC" id="1.1.1.85"/>
    </reaction>
</comment>
<comment type="cofactor">
    <cofactor evidence="1">
        <name>Mg(2+)</name>
        <dbReference type="ChEBI" id="CHEBI:18420"/>
    </cofactor>
    <cofactor evidence="1">
        <name>Mn(2+)</name>
        <dbReference type="ChEBI" id="CHEBI:29035"/>
    </cofactor>
    <text evidence="1">Binds 1 Mg(2+) or Mn(2+) ion per subunit.</text>
</comment>
<comment type="pathway">
    <text evidence="1">Amino-acid biosynthesis; L-leucine biosynthesis; L-leucine from 3-methyl-2-oxobutanoate: step 3/4.</text>
</comment>
<comment type="subunit">
    <text evidence="1">Homodimer.</text>
</comment>
<comment type="subcellular location">
    <subcellularLocation>
        <location evidence="1">Cytoplasm</location>
    </subcellularLocation>
</comment>
<comment type="similarity">
    <text evidence="1">Belongs to the isocitrate and isopropylmalate dehydrogenases family. LeuB type 1 subfamily.</text>
</comment>
<evidence type="ECO:0000255" key="1">
    <source>
        <dbReference type="HAMAP-Rule" id="MF_01033"/>
    </source>
</evidence>
<dbReference type="EC" id="1.1.1.85" evidence="1"/>
<dbReference type="EMBL" id="AE017224">
    <property type="protein sequence ID" value="AAX75773.1"/>
    <property type="molecule type" value="Genomic_DNA"/>
</dbReference>
<dbReference type="RefSeq" id="WP_002965756.1">
    <property type="nucleotide sequence ID" value="NC_006933.1"/>
</dbReference>
<dbReference type="SMR" id="Q579B1"/>
<dbReference type="EnsemblBacteria" id="AAX75773">
    <property type="protein sequence ID" value="AAX75773"/>
    <property type="gene ID" value="BruAb2_0342"/>
</dbReference>
<dbReference type="GeneID" id="93015715"/>
<dbReference type="KEGG" id="bmb:BruAb2_0342"/>
<dbReference type="HOGENOM" id="CLU_031953_0_3_5"/>
<dbReference type="UniPathway" id="UPA00048">
    <property type="reaction ID" value="UER00072"/>
</dbReference>
<dbReference type="Proteomes" id="UP000000540">
    <property type="component" value="Chromosome II"/>
</dbReference>
<dbReference type="GO" id="GO:0005829">
    <property type="term" value="C:cytosol"/>
    <property type="evidence" value="ECO:0007669"/>
    <property type="project" value="TreeGrafter"/>
</dbReference>
<dbReference type="GO" id="GO:0003862">
    <property type="term" value="F:3-isopropylmalate dehydrogenase activity"/>
    <property type="evidence" value="ECO:0007669"/>
    <property type="project" value="UniProtKB-UniRule"/>
</dbReference>
<dbReference type="GO" id="GO:0000287">
    <property type="term" value="F:magnesium ion binding"/>
    <property type="evidence" value="ECO:0007669"/>
    <property type="project" value="InterPro"/>
</dbReference>
<dbReference type="GO" id="GO:0051287">
    <property type="term" value="F:NAD binding"/>
    <property type="evidence" value="ECO:0007669"/>
    <property type="project" value="InterPro"/>
</dbReference>
<dbReference type="GO" id="GO:0009098">
    <property type="term" value="P:L-leucine biosynthetic process"/>
    <property type="evidence" value="ECO:0007669"/>
    <property type="project" value="UniProtKB-UniRule"/>
</dbReference>
<dbReference type="FunFam" id="3.40.718.10:FF:000006">
    <property type="entry name" value="3-isopropylmalate dehydrogenase"/>
    <property type="match status" value="1"/>
</dbReference>
<dbReference type="Gene3D" id="3.40.718.10">
    <property type="entry name" value="Isopropylmalate Dehydrogenase"/>
    <property type="match status" value="1"/>
</dbReference>
<dbReference type="HAMAP" id="MF_01033">
    <property type="entry name" value="LeuB_type1"/>
    <property type="match status" value="1"/>
</dbReference>
<dbReference type="InterPro" id="IPR019818">
    <property type="entry name" value="IsoCit/isopropylmalate_DH_CS"/>
</dbReference>
<dbReference type="InterPro" id="IPR024084">
    <property type="entry name" value="IsoPropMal-DH-like_dom"/>
</dbReference>
<dbReference type="InterPro" id="IPR004429">
    <property type="entry name" value="Isopropylmalate_DH"/>
</dbReference>
<dbReference type="NCBIfam" id="TIGR00169">
    <property type="entry name" value="leuB"/>
    <property type="match status" value="1"/>
</dbReference>
<dbReference type="PANTHER" id="PTHR42979">
    <property type="entry name" value="3-ISOPROPYLMALATE DEHYDROGENASE"/>
    <property type="match status" value="1"/>
</dbReference>
<dbReference type="PANTHER" id="PTHR42979:SF1">
    <property type="entry name" value="3-ISOPROPYLMALATE DEHYDROGENASE"/>
    <property type="match status" value="1"/>
</dbReference>
<dbReference type="Pfam" id="PF00180">
    <property type="entry name" value="Iso_dh"/>
    <property type="match status" value="1"/>
</dbReference>
<dbReference type="SMART" id="SM01329">
    <property type="entry name" value="Iso_dh"/>
    <property type="match status" value="1"/>
</dbReference>
<dbReference type="SUPFAM" id="SSF53659">
    <property type="entry name" value="Isocitrate/Isopropylmalate dehydrogenase-like"/>
    <property type="match status" value="1"/>
</dbReference>
<dbReference type="PROSITE" id="PS00470">
    <property type="entry name" value="IDH_IMDH"/>
    <property type="match status" value="1"/>
</dbReference>
<accession>Q579B1</accession>
<reference key="1">
    <citation type="journal article" date="2005" name="J. Bacteriol.">
        <title>Completion of the genome sequence of Brucella abortus and comparison to the highly similar genomes of Brucella melitensis and Brucella suis.</title>
        <authorList>
            <person name="Halling S.M."/>
            <person name="Peterson-Burch B.D."/>
            <person name="Bricker B.J."/>
            <person name="Zuerner R.L."/>
            <person name="Qing Z."/>
            <person name="Li L.-L."/>
            <person name="Kapur V."/>
            <person name="Alt D.P."/>
            <person name="Olsen S.C."/>
        </authorList>
    </citation>
    <scope>NUCLEOTIDE SEQUENCE [LARGE SCALE GENOMIC DNA]</scope>
    <source>
        <strain>9-941</strain>
    </source>
</reference>
<name>LEU3_BRUAB</name>
<protein>
    <recommendedName>
        <fullName evidence="1">3-isopropylmalate dehydrogenase</fullName>
        <ecNumber evidence="1">1.1.1.85</ecNumber>
    </recommendedName>
    <alternativeName>
        <fullName evidence="1">3-IPM-DH</fullName>
    </alternativeName>
    <alternativeName>
        <fullName evidence="1">Beta-IPM dehydrogenase</fullName>
        <shortName evidence="1">IMDH</shortName>
    </alternativeName>
</protein>
<feature type="chain" id="PRO_0000250105" description="3-isopropylmalate dehydrogenase">
    <location>
        <begin position="1"/>
        <end position="370"/>
    </location>
</feature>
<feature type="binding site" evidence="1">
    <location>
        <begin position="77"/>
        <end position="90"/>
    </location>
    <ligand>
        <name>NAD(+)</name>
        <dbReference type="ChEBI" id="CHEBI:57540"/>
    </ligand>
</feature>
<feature type="binding site" evidence="1">
    <location>
        <position position="97"/>
    </location>
    <ligand>
        <name>substrate</name>
    </ligand>
</feature>
<feature type="binding site" evidence="1">
    <location>
        <position position="107"/>
    </location>
    <ligand>
        <name>substrate</name>
    </ligand>
</feature>
<feature type="binding site" evidence="1">
    <location>
        <position position="135"/>
    </location>
    <ligand>
        <name>substrate</name>
    </ligand>
</feature>
<feature type="binding site" evidence="1">
    <location>
        <position position="226"/>
    </location>
    <ligand>
        <name>Mg(2+)</name>
        <dbReference type="ChEBI" id="CHEBI:18420"/>
    </ligand>
</feature>
<feature type="binding site" evidence="1">
    <location>
        <position position="226"/>
    </location>
    <ligand>
        <name>substrate</name>
    </ligand>
</feature>
<feature type="binding site" evidence="1">
    <location>
        <position position="250"/>
    </location>
    <ligand>
        <name>Mg(2+)</name>
        <dbReference type="ChEBI" id="CHEBI:18420"/>
    </ligand>
</feature>
<feature type="binding site" evidence="1">
    <location>
        <position position="254"/>
    </location>
    <ligand>
        <name>Mg(2+)</name>
        <dbReference type="ChEBI" id="CHEBI:18420"/>
    </ligand>
</feature>
<feature type="binding site" evidence="1">
    <location>
        <begin position="290"/>
        <end position="302"/>
    </location>
    <ligand>
        <name>NAD(+)</name>
        <dbReference type="ChEBI" id="CHEBI:57540"/>
    </ligand>
</feature>
<feature type="site" description="Important for catalysis" evidence="1">
    <location>
        <position position="142"/>
    </location>
</feature>
<feature type="site" description="Important for catalysis" evidence="1">
    <location>
        <position position="193"/>
    </location>
</feature>